<organism>
    <name type="scientific">Parvibaculum lavamentivorans (strain DS-1 / DSM 13023 / NCIMB 13966)</name>
    <dbReference type="NCBI Taxonomy" id="402881"/>
    <lineage>
        <taxon>Bacteria</taxon>
        <taxon>Pseudomonadati</taxon>
        <taxon>Pseudomonadota</taxon>
        <taxon>Alphaproteobacteria</taxon>
        <taxon>Hyphomicrobiales</taxon>
        <taxon>Parvibaculaceae</taxon>
        <taxon>Parvibaculum</taxon>
    </lineage>
</organism>
<name>PYRH_PARL1</name>
<proteinExistence type="inferred from homology"/>
<protein>
    <recommendedName>
        <fullName evidence="1">Uridylate kinase</fullName>
        <shortName evidence="1">UK</shortName>
        <ecNumber evidence="1">2.7.4.22</ecNumber>
    </recommendedName>
    <alternativeName>
        <fullName evidence="1">Uridine monophosphate kinase</fullName>
        <shortName evidence="1">UMP kinase</shortName>
        <shortName evidence="1">UMPK</shortName>
    </alternativeName>
</protein>
<keyword id="KW-0067">ATP-binding</keyword>
<keyword id="KW-0963">Cytoplasm</keyword>
<keyword id="KW-0418">Kinase</keyword>
<keyword id="KW-0547">Nucleotide-binding</keyword>
<keyword id="KW-0665">Pyrimidine biosynthesis</keyword>
<keyword id="KW-1185">Reference proteome</keyword>
<keyword id="KW-0808">Transferase</keyword>
<accession>A7HY17</accession>
<gene>
    <name evidence="1" type="primary">pyrH</name>
    <name type="ordered locus">Plav_3194</name>
</gene>
<reference key="1">
    <citation type="journal article" date="2011" name="Stand. Genomic Sci.">
        <title>Complete genome sequence of Parvibaculum lavamentivorans type strain (DS-1(T)).</title>
        <authorList>
            <person name="Schleheck D."/>
            <person name="Weiss M."/>
            <person name="Pitluck S."/>
            <person name="Bruce D."/>
            <person name="Land M.L."/>
            <person name="Han S."/>
            <person name="Saunders E."/>
            <person name="Tapia R."/>
            <person name="Detter C."/>
            <person name="Brettin T."/>
            <person name="Han J."/>
            <person name="Woyke T."/>
            <person name="Goodwin L."/>
            <person name="Pennacchio L."/>
            <person name="Nolan M."/>
            <person name="Cook A.M."/>
            <person name="Kjelleberg S."/>
            <person name="Thomas T."/>
        </authorList>
    </citation>
    <scope>NUCLEOTIDE SEQUENCE [LARGE SCALE GENOMIC DNA]</scope>
    <source>
        <strain>DS-1 / DSM 13023 / NCIMB 13966</strain>
    </source>
</reference>
<dbReference type="EC" id="2.7.4.22" evidence="1"/>
<dbReference type="EMBL" id="CP000774">
    <property type="protein sequence ID" value="ABS64800.1"/>
    <property type="molecule type" value="Genomic_DNA"/>
</dbReference>
<dbReference type="RefSeq" id="WP_012112126.1">
    <property type="nucleotide sequence ID" value="NC_009719.1"/>
</dbReference>
<dbReference type="SMR" id="A7HY17"/>
<dbReference type="STRING" id="402881.Plav_3194"/>
<dbReference type="KEGG" id="pla:Plav_3194"/>
<dbReference type="eggNOG" id="COG0528">
    <property type="taxonomic scope" value="Bacteria"/>
</dbReference>
<dbReference type="HOGENOM" id="CLU_033861_0_0_5"/>
<dbReference type="OrthoDB" id="9807458at2"/>
<dbReference type="UniPathway" id="UPA00159">
    <property type="reaction ID" value="UER00275"/>
</dbReference>
<dbReference type="Proteomes" id="UP000006377">
    <property type="component" value="Chromosome"/>
</dbReference>
<dbReference type="GO" id="GO:0005829">
    <property type="term" value="C:cytosol"/>
    <property type="evidence" value="ECO:0007669"/>
    <property type="project" value="TreeGrafter"/>
</dbReference>
<dbReference type="GO" id="GO:0005524">
    <property type="term" value="F:ATP binding"/>
    <property type="evidence" value="ECO:0007669"/>
    <property type="project" value="UniProtKB-KW"/>
</dbReference>
<dbReference type="GO" id="GO:0033862">
    <property type="term" value="F:UMP kinase activity"/>
    <property type="evidence" value="ECO:0007669"/>
    <property type="project" value="UniProtKB-EC"/>
</dbReference>
<dbReference type="GO" id="GO:0044210">
    <property type="term" value="P:'de novo' CTP biosynthetic process"/>
    <property type="evidence" value="ECO:0007669"/>
    <property type="project" value="UniProtKB-UniRule"/>
</dbReference>
<dbReference type="GO" id="GO:0006225">
    <property type="term" value="P:UDP biosynthetic process"/>
    <property type="evidence" value="ECO:0007669"/>
    <property type="project" value="TreeGrafter"/>
</dbReference>
<dbReference type="CDD" id="cd04254">
    <property type="entry name" value="AAK_UMPK-PyrH-Ec"/>
    <property type="match status" value="1"/>
</dbReference>
<dbReference type="FunFam" id="3.40.1160.10:FF:000001">
    <property type="entry name" value="Uridylate kinase"/>
    <property type="match status" value="1"/>
</dbReference>
<dbReference type="Gene3D" id="3.40.1160.10">
    <property type="entry name" value="Acetylglutamate kinase-like"/>
    <property type="match status" value="1"/>
</dbReference>
<dbReference type="HAMAP" id="MF_01220_B">
    <property type="entry name" value="PyrH_B"/>
    <property type="match status" value="1"/>
</dbReference>
<dbReference type="InterPro" id="IPR036393">
    <property type="entry name" value="AceGlu_kinase-like_sf"/>
</dbReference>
<dbReference type="InterPro" id="IPR001048">
    <property type="entry name" value="Asp/Glu/Uridylate_kinase"/>
</dbReference>
<dbReference type="InterPro" id="IPR011817">
    <property type="entry name" value="Uridylate_kinase"/>
</dbReference>
<dbReference type="InterPro" id="IPR015963">
    <property type="entry name" value="Uridylate_kinase_bac"/>
</dbReference>
<dbReference type="NCBIfam" id="TIGR02075">
    <property type="entry name" value="pyrH_bact"/>
    <property type="match status" value="1"/>
</dbReference>
<dbReference type="PANTHER" id="PTHR42833">
    <property type="entry name" value="URIDYLATE KINASE"/>
    <property type="match status" value="1"/>
</dbReference>
<dbReference type="PANTHER" id="PTHR42833:SF4">
    <property type="entry name" value="URIDYLATE KINASE PUMPKIN, CHLOROPLASTIC"/>
    <property type="match status" value="1"/>
</dbReference>
<dbReference type="Pfam" id="PF00696">
    <property type="entry name" value="AA_kinase"/>
    <property type="match status" value="1"/>
</dbReference>
<dbReference type="PIRSF" id="PIRSF005650">
    <property type="entry name" value="Uridylate_kin"/>
    <property type="match status" value="1"/>
</dbReference>
<dbReference type="SUPFAM" id="SSF53633">
    <property type="entry name" value="Carbamate kinase-like"/>
    <property type="match status" value="1"/>
</dbReference>
<evidence type="ECO:0000255" key="1">
    <source>
        <dbReference type="HAMAP-Rule" id="MF_01220"/>
    </source>
</evidence>
<comment type="function">
    <text evidence="1">Catalyzes the reversible phosphorylation of UMP to UDP.</text>
</comment>
<comment type="catalytic activity">
    <reaction evidence="1">
        <text>UMP + ATP = UDP + ADP</text>
        <dbReference type="Rhea" id="RHEA:24400"/>
        <dbReference type="ChEBI" id="CHEBI:30616"/>
        <dbReference type="ChEBI" id="CHEBI:57865"/>
        <dbReference type="ChEBI" id="CHEBI:58223"/>
        <dbReference type="ChEBI" id="CHEBI:456216"/>
        <dbReference type="EC" id="2.7.4.22"/>
    </reaction>
</comment>
<comment type="activity regulation">
    <text evidence="1">Inhibited by UTP.</text>
</comment>
<comment type="pathway">
    <text evidence="1">Pyrimidine metabolism; CTP biosynthesis via de novo pathway; UDP from UMP (UMPK route): step 1/1.</text>
</comment>
<comment type="subunit">
    <text evidence="1">Homohexamer.</text>
</comment>
<comment type="subcellular location">
    <subcellularLocation>
        <location evidence="1">Cytoplasm</location>
    </subcellularLocation>
</comment>
<comment type="similarity">
    <text evidence="1">Belongs to the UMP kinase family.</text>
</comment>
<feature type="chain" id="PRO_0000323913" description="Uridylate kinase">
    <location>
        <begin position="1"/>
        <end position="241"/>
    </location>
</feature>
<feature type="binding site" evidence="1">
    <location>
        <begin position="13"/>
        <end position="16"/>
    </location>
    <ligand>
        <name>ATP</name>
        <dbReference type="ChEBI" id="CHEBI:30616"/>
    </ligand>
</feature>
<feature type="binding site" evidence="1">
    <location>
        <position position="55"/>
    </location>
    <ligand>
        <name>UMP</name>
        <dbReference type="ChEBI" id="CHEBI:57865"/>
    </ligand>
</feature>
<feature type="binding site" evidence="1">
    <location>
        <position position="56"/>
    </location>
    <ligand>
        <name>ATP</name>
        <dbReference type="ChEBI" id="CHEBI:30616"/>
    </ligand>
</feature>
<feature type="binding site" evidence="1">
    <location>
        <position position="60"/>
    </location>
    <ligand>
        <name>ATP</name>
        <dbReference type="ChEBI" id="CHEBI:30616"/>
    </ligand>
</feature>
<feature type="binding site" evidence="1">
    <location>
        <position position="75"/>
    </location>
    <ligand>
        <name>UMP</name>
        <dbReference type="ChEBI" id="CHEBI:57865"/>
    </ligand>
</feature>
<feature type="binding site" evidence="1">
    <location>
        <begin position="136"/>
        <end position="143"/>
    </location>
    <ligand>
        <name>UMP</name>
        <dbReference type="ChEBI" id="CHEBI:57865"/>
    </ligand>
</feature>
<feature type="binding site" evidence="1">
    <location>
        <position position="163"/>
    </location>
    <ligand>
        <name>ATP</name>
        <dbReference type="ChEBI" id="CHEBI:30616"/>
    </ligand>
</feature>
<feature type="binding site" evidence="1">
    <location>
        <position position="164"/>
    </location>
    <ligand>
        <name>ATP</name>
        <dbReference type="ChEBI" id="CHEBI:30616"/>
    </ligand>
</feature>
<feature type="binding site" evidence="1">
    <location>
        <position position="169"/>
    </location>
    <ligand>
        <name>ATP</name>
        <dbReference type="ChEBI" id="CHEBI:30616"/>
    </ligand>
</feature>
<feature type="binding site" evidence="1">
    <location>
        <position position="172"/>
    </location>
    <ligand>
        <name>ATP</name>
        <dbReference type="ChEBI" id="CHEBI:30616"/>
    </ligand>
</feature>
<sequence length="241" mass="25621">MSDKPLYSRVLLKVSGEALMGPAQYGIDLDTVDRVARDIKQAIDAGVQVCLVIGGGNIFRGLSGAAKGMERASADYMGMLATVMNALAMQTALEAIGVPTRVQSAIPMMTVCEPYIRRRAVRHMEKGRVVIFAAGTGNPFFTTDTAAALRAVEMGCDALLKGTQVDGVYSADPHKVANAERYDRLTYMDVLARDLKVMDASAIALARENAIPIIVYSIDEPGGFAEVLTGAGRCTIISDAA</sequence>